<keyword id="KW-0328">Glycosyltransferase</keyword>
<keyword id="KW-1185">Reference proteome</keyword>
<keyword id="KW-0808">Transferase</keyword>
<name>U74D1_ARATH</name>
<protein>
    <recommendedName>
        <fullName>UDP-glycosyltransferase 74D1</fullName>
        <ecNumber>2.4.1.-</ecNumber>
    </recommendedName>
    <alternativeName>
        <fullName>Jasmonate glucosyltransferase 1</fullName>
        <shortName>AtJGT1</shortName>
    </alternativeName>
</protein>
<sequence length="456" mass="51053">MGEKAKANVLVFSFPIQGHINPLLQFSKRLLSKNVNVTFLTTSSTHNSILRRAITGGATALPLSFVPIDDGFEEDHPSTDTSPDYFAKFQENVSRSLSELISSMDPKPNAVVYDSCLPYVLDVCRKHPGVAAASFFTQSSTVNATYIHFLRGEFKEFQNDVVLPAMPPLKGNDLPVFLYDNNLCRPLFELISSQFVNVDDIDFFLVNSFDELEVEVLQWMKNQWPVKNIGPMIPSMYLDKRLAGDKDYGINLFNAQVNECLDWLDSKPPGSVIYVSFGSLAVLKDDQMIEVAAGLKQTGHNFLWVVRETETKKLPSNYIEDICDKGLIVNWSPQLQVLAHKSIGCFMTHCGWNSTLEALSLGVALIGMPAYSDQPTNAKFIEDVWKVGVRVKADQNGFVPKEEIVRCVGEVMEDMSEKGKEIRKNARRLMEFAREALSDGGNSDKNIDEFVAKIVR</sequence>
<accession>Q9SKC5</accession>
<accession>Q8LFR6</accession>
<gene>
    <name type="primary">UGT74D1</name>
    <name type="synonym">JGT1</name>
    <name type="ordered locus">At2g31750</name>
    <name type="ORF">F20M17.21</name>
</gene>
<dbReference type="EC" id="2.4.1.-"/>
<dbReference type="EMBL" id="DQ158907">
    <property type="protein sequence ID" value="ABA39729.1"/>
    <property type="molecule type" value="mRNA"/>
</dbReference>
<dbReference type="EMBL" id="AC006533">
    <property type="protein sequence ID" value="AAD32297.1"/>
    <property type="molecule type" value="Genomic_DNA"/>
</dbReference>
<dbReference type="EMBL" id="CP002685">
    <property type="protein sequence ID" value="AEC08580.1"/>
    <property type="molecule type" value="Genomic_DNA"/>
</dbReference>
<dbReference type="EMBL" id="AY125506">
    <property type="protein sequence ID" value="AAM78098.1"/>
    <property type="molecule type" value="mRNA"/>
</dbReference>
<dbReference type="EMBL" id="BT000622">
    <property type="protein sequence ID" value="AAN38705.1"/>
    <property type="molecule type" value="mRNA"/>
</dbReference>
<dbReference type="EMBL" id="AY084687">
    <property type="protein sequence ID" value="AAM61249.1"/>
    <property type="molecule type" value="mRNA"/>
</dbReference>
<dbReference type="PIR" id="F84724">
    <property type="entry name" value="F84724"/>
</dbReference>
<dbReference type="RefSeq" id="NP_180734.1">
    <property type="nucleotide sequence ID" value="NM_128733.5"/>
</dbReference>
<dbReference type="SMR" id="Q9SKC5"/>
<dbReference type="BioGRID" id="3079">
    <property type="interactions" value="1"/>
</dbReference>
<dbReference type="FunCoup" id="Q9SKC5">
    <property type="interactions" value="110"/>
</dbReference>
<dbReference type="STRING" id="3702.Q9SKC5"/>
<dbReference type="CAZy" id="GT1">
    <property type="family name" value="Glycosyltransferase Family 1"/>
</dbReference>
<dbReference type="PaxDb" id="3702-AT2G31750.1"/>
<dbReference type="ProteomicsDB" id="228675"/>
<dbReference type="EnsemblPlants" id="AT2G31750.1">
    <property type="protein sequence ID" value="AT2G31750.1"/>
    <property type="gene ID" value="AT2G31750"/>
</dbReference>
<dbReference type="GeneID" id="817732"/>
<dbReference type="Gramene" id="AT2G31750.1">
    <property type="protein sequence ID" value="AT2G31750.1"/>
    <property type="gene ID" value="AT2G31750"/>
</dbReference>
<dbReference type="KEGG" id="ath:AT2G31750"/>
<dbReference type="Araport" id="AT2G31750"/>
<dbReference type="TAIR" id="AT2G31750">
    <property type="gene designation" value="UGT74D1"/>
</dbReference>
<dbReference type="eggNOG" id="KOG1192">
    <property type="taxonomic scope" value="Eukaryota"/>
</dbReference>
<dbReference type="HOGENOM" id="CLU_001724_0_1_1"/>
<dbReference type="InParanoid" id="Q9SKC5"/>
<dbReference type="OMA" id="EYCIREM"/>
<dbReference type="PhylomeDB" id="Q9SKC5"/>
<dbReference type="BioCyc" id="ARA:AT2G31750-MONOMER"/>
<dbReference type="PRO" id="PR:Q9SKC5"/>
<dbReference type="Proteomes" id="UP000006548">
    <property type="component" value="Chromosome 2"/>
</dbReference>
<dbReference type="ExpressionAtlas" id="Q9SKC5">
    <property type="expression patterns" value="baseline and differential"/>
</dbReference>
<dbReference type="GO" id="GO:0005829">
    <property type="term" value="C:cytosol"/>
    <property type="evidence" value="ECO:0007005"/>
    <property type="project" value="TAIR"/>
</dbReference>
<dbReference type="GO" id="GO:0005777">
    <property type="term" value="C:peroxisome"/>
    <property type="evidence" value="ECO:0007005"/>
    <property type="project" value="TAIR"/>
</dbReference>
<dbReference type="GO" id="GO:0052638">
    <property type="term" value="F:indole-3-butyrate beta-glucosyltransferase activity"/>
    <property type="evidence" value="ECO:0000314"/>
    <property type="project" value="TAIR"/>
</dbReference>
<dbReference type="GO" id="GO:0009850">
    <property type="term" value="P:auxin metabolic process"/>
    <property type="evidence" value="ECO:0000314"/>
    <property type="project" value="TAIR"/>
</dbReference>
<dbReference type="CDD" id="cd03784">
    <property type="entry name" value="GT1_Gtf-like"/>
    <property type="match status" value="1"/>
</dbReference>
<dbReference type="FunFam" id="3.40.50.2000:FF:000019">
    <property type="entry name" value="Glycosyltransferase"/>
    <property type="match status" value="1"/>
</dbReference>
<dbReference type="Gene3D" id="3.40.50.2000">
    <property type="entry name" value="Glycogen Phosphorylase B"/>
    <property type="match status" value="2"/>
</dbReference>
<dbReference type="InterPro" id="IPR002213">
    <property type="entry name" value="UDP_glucos_trans"/>
</dbReference>
<dbReference type="PANTHER" id="PTHR11926">
    <property type="entry name" value="GLUCOSYL/GLUCURONOSYL TRANSFERASES"/>
    <property type="match status" value="1"/>
</dbReference>
<dbReference type="PANTHER" id="PTHR11926:SF1270">
    <property type="entry name" value="UDP-GLYCOSYLTRANSFERASE 74D1"/>
    <property type="match status" value="1"/>
</dbReference>
<dbReference type="Pfam" id="PF00201">
    <property type="entry name" value="UDPGT"/>
    <property type="match status" value="1"/>
</dbReference>
<dbReference type="SUPFAM" id="SSF53756">
    <property type="entry name" value="UDP-Glycosyltransferase/glycogen phosphorylase"/>
    <property type="match status" value="1"/>
</dbReference>
<proteinExistence type="evidence at protein level"/>
<reference key="1">
    <citation type="journal article" date="2006" name="J. Plant Biol.">
        <title>Biochemical characterization of an Arabidopsis glucosyltransferase with high activity toward jasmonic acid.</title>
        <authorList>
            <person name="Song J.T."/>
        </authorList>
    </citation>
    <scope>NUCLEOTIDE SEQUENCE [MRNA]</scope>
    <scope>FUNCTION</scope>
    <scope>BIOPHYSICOCHEMICAL PROPERTIES</scope>
    <scope>TISSUE SPECIFICITY</scope>
</reference>
<reference key="2">
    <citation type="journal article" date="1999" name="Nature">
        <title>Sequence and analysis of chromosome 2 of the plant Arabidopsis thaliana.</title>
        <authorList>
            <person name="Lin X."/>
            <person name="Kaul S."/>
            <person name="Rounsley S.D."/>
            <person name="Shea T.P."/>
            <person name="Benito M.-I."/>
            <person name="Town C.D."/>
            <person name="Fujii C.Y."/>
            <person name="Mason T.M."/>
            <person name="Bowman C.L."/>
            <person name="Barnstead M.E."/>
            <person name="Feldblyum T.V."/>
            <person name="Buell C.R."/>
            <person name="Ketchum K.A."/>
            <person name="Lee J.J."/>
            <person name="Ronning C.M."/>
            <person name="Koo H.L."/>
            <person name="Moffat K.S."/>
            <person name="Cronin L.A."/>
            <person name="Shen M."/>
            <person name="Pai G."/>
            <person name="Van Aken S."/>
            <person name="Umayam L."/>
            <person name="Tallon L.J."/>
            <person name="Gill J.E."/>
            <person name="Adams M.D."/>
            <person name="Carrera A.J."/>
            <person name="Creasy T.H."/>
            <person name="Goodman H.M."/>
            <person name="Somerville C.R."/>
            <person name="Copenhaver G.P."/>
            <person name="Preuss D."/>
            <person name="Nierman W.C."/>
            <person name="White O."/>
            <person name="Eisen J.A."/>
            <person name="Salzberg S.L."/>
            <person name="Fraser C.M."/>
            <person name="Venter J.C."/>
        </authorList>
    </citation>
    <scope>NUCLEOTIDE SEQUENCE [LARGE SCALE GENOMIC DNA]</scope>
    <source>
        <strain>cv. Columbia</strain>
    </source>
</reference>
<reference key="3">
    <citation type="journal article" date="2017" name="Plant J.">
        <title>Araport11: a complete reannotation of the Arabidopsis thaliana reference genome.</title>
        <authorList>
            <person name="Cheng C.Y."/>
            <person name="Krishnakumar V."/>
            <person name="Chan A.P."/>
            <person name="Thibaud-Nissen F."/>
            <person name="Schobel S."/>
            <person name="Town C.D."/>
        </authorList>
    </citation>
    <scope>GENOME REANNOTATION</scope>
    <source>
        <strain>cv. Columbia</strain>
    </source>
</reference>
<reference key="4">
    <citation type="journal article" date="2003" name="Science">
        <title>Empirical analysis of transcriptional activity in the Arabidopsis genome.</title>
        <authorList>
            <person name="Yamada K."/>
            <person name="Lim J."/>
            <person name="Dale J.M."/>
            <person name="Chen H."/>
            <person name="Shinn P."/>
            <person name="Palm C.J."/>
            <person name="Southwick A.M."/>
            <person name="Wu H.C."/>
            <person name="Kim C.J."/>
            <person name="Nguyen M."/>
            <person name="Pham P.K."/>
            <person name="Cheuk R.F."/>
            <person name="Karlin-Newmann G."/>
            <person name="Liu S.X."/>
            <person name="Lam B."/>
            <person name="Sakano H."/>
            <person name="Wu T."/>
            <person name="Yu G."/>
            <person name="Miranda M."/>
            <person name="Quach H.L."/>
            <person name="Tripp M."/>
            <person name="Chang C.H."/>
            <person name="Lee J.M."/>
            <person name="Toriumi M.J."/>
            <person name="Chan M.M."/>
            <person name="Tang C.C."/>
            <person name="Onodera C.S."/>
            <person name="Deng J.M."/>
            <person name="Akiyama K."/>
            <person name="Ansari Y."/>
            <person name="Arakawa T."/>
            <person name="Banh J."/>
            <person name="Banno F."/>
            <person name="Bowser L."/>
            <person name="Brooks S.Y."/>
            <person name="Carninci P."/>
            <person name="Chao Q."/>
            <person name="Choy N."/>
            <person name="Enju A."/>
            <person name="Goldsmith A.D."/>
            <person name="Gurjal M."/>
            <person name="Hansen N.F."/>
            <person name="Hayashizaki Y."/>
            <person name="Johnson-Hopson C."/>
            <person name="Hsuan V.W."/>
            <person name="Iida K."/>
            <person name="Karnes M."/>
            <person name="Khan S."/>
            <person name="Koesema E."/>
            <person name="Ishida J."/>
            <person name="Jiang P.X."/>
            <person name="Jones T."/>
            <person name="Kawai J."/>
            <person name="Kamiya A."/>
            <person name="Meyers C."/>
            <person name="Nakajima M."/>
            <person name="Narusaka M."/>
            <person name="Seki M."/>
            <person name="Sakurai T."/>
            <person name="Satou M."/>
            <person name="Tamse R."/>
            <person name="Vaysberg M."/>
            <person name="Wallender E.K."/>
            <person name="Wong C."/>
            <person name="Yamamura Y."/>
            <person name="Yuan S."/>
            <person name="Shinozaki K."/>
            <person name="Davis R.W."/>
            <person name="Theologis A."/>
            <person name="Ecker J.R."/>
        </authorList>
    </citation>
    <scope>NUCLEOTIDE SEQUENCE [LARGE SCALE MRNA]</scope>
    <source>
        <strain>cv. Columbia</strain>
    </source>
</reference>
<reference key="5">
    <citation type="submission" date="2002-03" db="EMBL/GenBank/DDBJ databases">
        <title>Full-length cDNA from Arabidopsis thaliana.</title>
        <authorList>
            <person name="Brover V.V."/>
            <person name="Troukhan M.E."/>
            <person name="Alexandrov N.A."/>
            <person name="Lu Y.-P."/>
            <person name="Flavell R.B."/>
            <person name="Feldmann K.A."/>
        </authorList>
    </citation>
    <scope>NUCLEOTIDE SEQUENCE [LARGE SCALE MRNA]</scope>
</reference>
<reference key="6">
    <citation type="journal article" date="2001" name="J. Biol. Chem.">
        <title>Phylogenetic analysis of the UDP-glycosyltransferase multigene family of Arabidopsis thaliana.</title>
        <authorList>
            <person name="Li Y."/>
            <person name="Baldauf S."/>
            <person name="Lim E.K."/>
            <person name="Bowles D.J."/>
        </authorList>
    </citation>
    <scope>GENE FAMILY</scope>
</reference>
<organism>
    <name type="scientific">Arabidopsis thaliana</name>
    <name type="common">Mouse-ear cress</name>
    <dbReference type="NCBI Taxonomy" id="3702"/>
    <lineage>
        <taxon>Eukaryota</taxon>
        <taxon>Viridiplantae</taxon>
        <taxon>Streptophyta</taxon>
        <taxon>Embryophyta</taxon>
        <taxon>Tracheophyta</taxon>
        <taxon>Spermatophyta</taxon>
        <taxon>Magnoliopsida</taxon>
        <taxon>eudicotyledons</taxon>
        <taxon>Gunneridae</taxon>
        <taxon>Pentapetalae</taxon>
        <taxon>rosids</taxon>
        <taxon>malvids</taxon>
        <taxon>Brassicales</taxon>
        <taxon>Brassicaceae</taxon>
        <taxon>Camelineae</taxon>
        <taxon>Arabidopsis</taxon>
    </lineage>
</organism>
<comment type="function">
    <text evidence="2">Glucosyltransferase that glucosylates jasmonate (JA) and JA derivatives. Also active on indole-3-acetic acid (IAA), 4-coumrate, cinnamate and caffeate.</text>
</comment>
<comment type="biophysicochemical properties">
    <kinetics>
        <KM evidence="2">290 uM for jasmonate</KM>
        <KM evidence="2">540 uM for indole-3-acetic acid</KM>
    </kinetics>
    <phDependence>
        <text evidence="2">Optimum pH is 7.0.</text>
    </phDependence>
</comment>
<comment type="tissue specificity">
    <text evidence="2">Expressed in leaves.</text>
</comment>
<comment type="similarity">
    <text evidence="3">Belongs to the UDP-glycosyltransferase family.</text>
</comment>
<feature type="chain" id="PRO_0000409101" description="UDP-glycosyltransferase 74D1">
    <location>
        <begin position="1"/>
        <end position="456"/>
    </location>
</feature>
<feature type="binding site" evidence="1">
    <location>
        <position position="279"/>
    </location>
    <ligand>
        <name>UDP-alpha-D-glucose</name>
        <dbReference type="ChEBI" id="CHEBI:58885"/>
    </ligand>
</feature>
<feature type="binding site" evidence="1">
    <location>
        <begin position="332"/>
        <end position="334"/>
    </location>
    <ligand>
        <name>UDP-alpha-D-glucose</name>
        <dbReference type="ChEBI" id="CHEBI:58885"/>
    </ligand>
</feature>
<feature type="binding site" evidence="1">
    <location>
        <begin position="349"/>
        <end position="357"/>
    </location>
    <ligand>
        <name>UDP-alpha-D-glucose</name>
        <dbReference type="ChEBI" id="CHEBI:58885"/>
    </ligand>
</feature>
<feature type="binding site" evidence="1">
    <location>
        <begin position="371"/>
        <end position="374"/>
    </location>
    <ligand>
        <name>UDP-alpha-D-glucose</name>
        <dbReference type="ChEBI" id="CHEBI:58885"/>
    </ligand>
</feature>
<feature type="sequence conflict" description="In Ref. 5; AAM61249." evidence="3" ref="5">
    <original>CD</original>
    <variation>GE</variation>
    <location>
        <begin position="323"/>
        <end position="324"/>
    </location>
</feature>
<evidence type="ECO:0000250" key="1"/>
<evidence type="ECO:0000269" key="2">
    <source ref="1"/>
</evidence>
<evidence type="ECO:0000305" key="3"/>